<comment type="function">
    <text evidence="1 9">G-protein coupled receptor for PEN, a neuropeptide produced from the precursor protein, proSAAS (encoded by PCSK1N). Acts through a G(i)- and G(q)-alpha-alpha-mediated pathway in response to PEN (PubMed:27117253). Plays a role in food intake and body weight regulation. May contribute to the regulation of anxiety-related behaviors (By similarity).</text>
</comment>
<comment type="subcellular location">
    <subcellularLocation>
        <location evidence="1">Cell membrane</location>
        <topology evidence="3">Multi-pass membrane protein</topology>
    </subcellularLocation>
    <text evidence="1">Colocalizes with GPR171 in the paraventricular nucleus. Colocalizes with the ghrelin receptor GHSR1A in the hypothalamus.</text>
</comment>
<comment type="alternative products">
    <event type="alternative splicing"/>
    <isoform>
        <id>Q9NYM4-1</id>
        <name>1</name>
        <sequence type="displayed"/>
    </isoform>
    <isoform>
        <id>Q9NYM4-2</id>
        <name>2</name>
        <sequence type="described" ref="VSP_061501"/>
    </isoform>
</comment>
<comment type="tissue specificity">
    <text evidence="8">Highly expressed in the brain and spinal cord, and found in lower concentrations in the thymus and other tissues.</text>
</comment>
<comment type="miscellaneous">
    <text evidence="1 2">NPY has been reported to be a ligand for GPR83 (in vitro) (By similarity). However, a more recent study found that radiolabeled PEN binding to GPR83 is not affected by NPY concentrations below 1 mM, only very high, non-physiological concentrations causes a partial, displacement of PEN binding (By similarity).</text>
</comment>
<comment type="similarity">
    <text evidence="4">Belongs to the G-protein coupled receptor 1 family.</text>
</comment>
<comment type="sequence caution" evidence="14">
    <conflict type="erroneous initiation">
        <sequence resource="EMBL-CDS" id="BAA96064"/>
    </conflict>
</comment>
<keyword id="KW-0025">Alternative splicing</keyword>
<keyword id="KW-1003">Cell membrane</keyword>
<keyword id="KW-1015">Disulfide bond</keyword>
<keyword id="KW-0297">G-protein coupled receptor</keyword>
<keyword id="KW-0325">Glycoprotein</keyword>
<keyword id="KW-0472">Membrane</keyword>
<keyword id="KW-0675">Receptor</keyword>
<keyword id="KW-1185">Reference proteome</keyword>
<keyword id="KW-0732">Signal</keyword>
<keyword id="KW-0807">Transducer</keyword>
<keyword id="KW-0812">Transmembrane</keyword>
<keyword id="KW-1133">Transmembrane helix</keyword>
<accession>Q9NYM4</accession>
<accession>B0M0K5</accession>
<accession>F5GZ43</accession>
<accession>Q6NWR4</accession>
<accession>Q9P1Y8</accession>
<proteinExistence type="evidence at protein level"/>
<organism>
    <name type="scientific">Homo sapiens</name>
    <name type="common">Human</name>
    <dbReference type="NCBI Taxonomy" id="9606"/>
    <lineage>
        <taxon>Eukaryota</taxon>
        <taxon>Metazoa</taxon>
        <taxon>Chordata</taxon>
        <taxon>Craniata</taxon>
        <taxon>Vertebrata</taxon>
        <taxon>Euteleostomi</taxon>
        <taxon>Mammalia</taxon>
        <taxon>Eutheria</taxon>
        <taxon>Euarchontoglires</taxon>
        <taxon>Primates</taxon>
        <taxon>Haplorrhini</taxon>
        <taxon>Catarrhini</taxon>
        <taxon>Hominidae</taxon>
        <taxon>Homo</taxon>
    </lineage>
</organism>
<dbReference type="EMBL" id="AF236081">
    <property type="protein sequence ID" value="AAF43705.1"/>
    <property type="molecule type" value="mRNA"/>
</dbReference>
<dbReference type="EMBL" id="AB040973">
    <property type="protein sequence ID" value="BAA96064.1"/>
    <property type="status" value="ALT_INIT"/>
    <property type="molecule type" value="mRNA"/>
</dbReference>
<dbReference type="EMBL" id="AK315161">
    <property type="protein sequence ID" value="BAG37605.1"/>
    <property type="molecule type" value="mRNA"/>
</dbReference>
<dbReference type="EMBL" id="EU432120">
    <property type="protein sequence ID" value="ABY87919.1"/>
    <property type="molecule type" value="mRNA"/>
</dbReference>
<dbReference type="EMBL" id="AP000765">
    <property type="status" value="NOT_ANNOTATED_CDS"/>
    <property type="molecule type" value="Genomic_DNA"/>
</dbReference>
<dbReference type="EMBL" id="BC067473">
    <property type="protein sequence ID" value="AAH67473.1"/>
    <property type="molecule type" value="mRNA"/>
</dbReference>
<dbReference type="EMBL" id="CH471065">
    <property type="protein sequence ID" value="EAW66929.1"/>
    <property type="molecule type" value="Genomic_DNA"/>
</dbReference>
<dbReference type="CCDS" id="CCDS81616.1">
    <molecule id="Q9NYM4-2"/>
</dbReference>
<dbReference type="CCDS" id="CCDS8297.1">
    <molecule id="Q9NYM4-1"/>
</dbReference>
<dbReference type="RefSeq" id="NP_001317274.1">
    <molecule id="Q9NYM4-2"/>
    <property type="nucleotide sequence ID" value="NM_001330345.2"/>
</dbReference>
<dbReference type="RefSeq" id="NP_057624.3">
    <molecule id="Q9NYM4-1"/>
    <property type="nucleotide sequence ID" value="NM_016540.3"/>
</dbReference>
<dbReference type="SMR" id="Q9NYM4"/>
<dbReference type="BioGRID" id="116095">
    <property type="interactions" value="2"/>
</dbReference>
<dbReference type="CORUM" id="Q9NYM4"/>
<dbReference type="FunCoup" id="Q9NYM4">
    <property type="interactions" value="694"/>
</dbReference>
<dbReference type="IntAct" id="Q9NYM4">
    <property type="interactions" value="2"/>
</dbReference>
<dbReference type="STRING" id="9606.ENSP00000243673"/>
<dbReference type="ChEMBL" id="CHEMBL4523924"/>
<dbReference type="GlyCosmos" id="Q9NYM4">
    <property type="glycosylation" value="3 sites, No reported glycans"/>
</dbReference>
<dbReference type="GlyGen" id="Q9NYM4">
    <property type="glycosylation" value="3 sites"/>
</dbReference>
<dbReference type="iPTMnet" id="Q9NYM4"/>
<dbReference type="PhosphoSitePlus" id="Q9NYM4"/>
<dbReference type="BioMuta" id="GPR83"/>
<dbReference type="DMDM" id="212276435"/>
<dbReference type="PaxDb" id="9606-ENSP00000243673"/>
<dbReference type="PeptideAtlas" id="Q9NYM4"/>
<dbReference type="ProteomicsDB" id="83253"/>
<dbReference type="Antibodypedia" id="17864">
    <property type="antibodies" value="397 antibodies from 33 providers"/>
</dbReference>
<dbReference type="DNASU" id="10888"/>
<dbReference type="Ensembl" id="ENST00000243673.7">
    <molecule id="Q9NYM4-1"/>
    <property type="protein sequence ID" value="ENSP00000243673.2"/>
    <property type="gene ID" value="ENSG00000123901.9"/>
</dbReference>
<dbReference type="Ensembl" id="ENST00000539203.2">
    <molecule id="Q9NYM4-2"/>
    <property type="protein sequence ID" value="ENSP00000441550.1"/>
    <property type="gene ID" value="ENSG00000123901.9"/>
</dbReference>
<dbReference type="GeneID" id="10888"/>
<dbReference type="KEGG" id="hsa:10888"/>
<dbReference type="MANE-Select" id="ENST00000243673.7">
    <property type="protein sequence ID" value="ENSP00000243673.2"/>
    <property type="RefSeq nucleotide sequence ID" value="NM_016540.4"/>
    <property type="RefSeq protein sequence ID" value="NP_057624.3"/>
</dbReference>
<dbReference type="UCSC" id="uc001pet.2">
    <molecule id="Q9NYM4-1"/>
    <property type="organism name" value="human"/>
</dbReference>
<dbReference type="AGR" id="HGNC:4523"/>
<dbReference type="CTD" id="10888"/>
<dbReference type="DisGeNET" id="10888"/>
<dbReference type="GeneCards" id="GPR83"/>
<dbReference type="HGNC" id="HGNC:4523">
    <property type="gene designation" value="GPR83"/>
</dbReference>
<dbReference type="HPA" id="ENSG00000123901">
    <property type="expression patterns" value="Tissue enriched (brain)"/>
</dbReference>
<dbReference type="MIM" id="605569">
    <property type="type" value="gene"/>
</dbReference>
<dbReference type="neXtProt" id="NX_Q9NYM4"/>
<dbReference type="OpenTargets" id="ENSG00000123901"/>
<dbReference type="PharmGKB" id="PA28927"/>
<dbReference type="VEuPathDB" id="HostDB:ENSG00000123901"/>
<dbReference type="eggNOG" id="KOG3656">
    <property type="taxonomic scope" value="Eukaryota"/>
</dbReference>
<dbReference type="GeneTree" id="ENSGT00940000154336"/>
<dbReference type="HOGENOM" id="CLU_009579_6_1_1"/>
<dbReference type="InParanoid" id="Q9NYM4"/>
<dbReference type="OMA" id="IYISVIW"/>
<dbReference type="OrthoDB" id="5952899at2759"/>
<dbReference type="PAN-GO" id="Q9NYM4">
    <property type="GO annotations" value="3 GO annotations based on evolutionary models"/>
</dbReference>
<dbReference type="PhylomeDB" id="Q9NYM4"/>
<dbReference type="TreeFam" id="TF315303"/>
<dbReference type="PathwayCommons" id="Q9NYM4"/>
<dbReference type="Reactome" id="R-HSA-418555">
    <property type="pathway name" value="G alpha (s) signalling events"/>
</dbReference>
<dbReference type="BioGRID-ORCS" id="10888">
    <property type="hits" value="10 hits in 1143 CRISPR screens"/>
</dbReference>
<dbReference type="GeneWiki" id="GPR83"/>
<dbReference type="GenomeRNAi" id="10888"/>
<dbReference type="Pharos" id="Q9NYM4">
    <property type="development level" value="Tchem"/>
</dbReference>
<dbReference type="PRO" id="PR:Q9NYM4"/>
<dbReference type="Proteomes" id="UP000005640">
    <property type="component" value="Chromosome 11"/>
</dbReference>
<dbReference type="RNAct" id="Q9NYM4">
    <property type="molecule type" value="protein"/>
</dbReference>
<dbReference type="Bgee" id="ENSG00000123901">
    <property type="expression patterns" value="Expressed in cerebellar vermis and 83 other cell types or tissues"/>
</dbReference>
<dbReference type="ExpressionAtlas" id="Q9NYM4">
    <property type="expression patterns" value="baseline and differential"/>
</dbReference>
<dbReference type="GO" id="GO:0005929">
    <property type="term" value="C:cilium"/>
    <property type="evidence" value="ECO:0000314"/>
    <property type="project" value="MGI"/>
</dbReference>
<dbReference type="GO" id="GO:0097730">
    <property type="term" value="C:non-motile cilium"/>
    <property type="evidence" value="ECO:0007669"/>
    <property type="project" value="Ensembl"/>
</dbReference>
<dbReference type="GO" id="GO:0005886">
    <property type="term" value="C:plasma membrane"/>
    <property type="evidence" value="ECO:0000250"/>
    <property type="project" value="UniProtKB"/>
</dbReference>
<dbReference type="GO" id="GO:0004930">
    <property type="term" value="F:G protein-coupled receptor activity"/>
    <property type="evidence" value="ECO:0000250"/>
    <property type="project" value="UniProtKB"/>
</dbReference>
<dbReference type="GO" id="GO:0008188">
    <property type="term" value="F:neuropeptide receptor activity"/>
    <property type="evidence" value="ECO:0000250"/>
    <property type="project" value="UniProtKB"/>
</dbReference>
<dbReference type="GO" id="GO:0004983">
    <property type="term" value="F:neuropeptide Y receptor activity"/>
    <property type="evidence" value="ECO:0007669"/>
    <property type="project" value="InterPro"/>
</dbReference>
<dbReference type="GO" id="GO:0007631">
    <property type="term" value="P:feeding behavior"/>
    <property type="evidence" value="ECO:0007669"/>
    <property type="project" value="Ensembl"/>
</dbReference>
<dbReference type="GO" id="GO:0007186">
    <property type="term" value="P:G protein-coupled receptor signaling pathway"/>
    <property type="evidence" value="ECO:0000250"/>
    <property type="project" value="UniProtKB"/>
</dbReference>
<dbReference type="GO" id="GO:0007218">
    <property type="term" value="P:neuropeptide signaling pathway"/>
    <property type="evidence" value="ECO:0000250"/>
    <property type="project" value="UniProtKB"/>
</dbReference>
<dbReference type="GO" id="GO:0007200">
    <property type="term" value="P:phospholipase C-activating G protein-coupled receptor signaling pathway"/>
    <property type="evidence" value="ECO:0000250"/>
    <property type="project" value="UniProtKB"/>
</dbReference>
<dbReference type="GO" id="GO:0051384">
    <property type="term" value="P:response to glucocorticoid"/>
    <property type="evidence" value="ECO:0007669"/>
    <property type="project" value="Ensembl"/>
</dbReference>
<dbReference type="CDD" id="cd15389">
    <property type="entry name" value="7tmA_GPR83"/>
    <property type="match status" value="1"/>
</dbReference>
<dbReference type="FunFam" id="1.20.1070.10:FF:000191">
    <property type="entry name" value="Probable G-protein coupled receptor 83"/>
    <property type="match status" value="1"/>
</dbReference>
<dbReference type="Gene3D" id="1.20.1070.10">
    <property type="entry name" value="Rhodopsin 7-helix transmembrane proteins"/>
    <property type="match status" value="1"/>
</dbReference>
<dbReference type="InterPro" id="IPR000276">
    <property type="entry name" value="GPCR_Rhodpsn"/>
</dbReference>
<dbReference type="InterPro" id="IPR017452">
    <property type="entry name" value="GPCR_Rhodpsn_7TM"/>
</dbReference>
<dbReference type="InterPro" id="IPR000611">
    <property type="entry name" value="NPY_rcpt"/>
</dbReference>
<dbReference type="PANTHER" id="PTHR24238">
    <property type="entry name" value="G-PROTEIN COUPLED RECEPTOR"/>
    <property type="match status" value="1"/>
</dbReference>
<dbReference type="PANTHER" id="PTHR24238:SF57">
    <property type="entry name" value="G-PROTEIN COUPLED RECEPTOR 83"/>
    <property type="match status" value="1"/>
</dbReference>
<dbReference type="Pfam" id="PF00001">
    <property type="entry name" value="7tm_1"/>
    <property type="match status" value="1"/>
</dbReference>
<dbReference type="PRINTS" id="PR00237">
    <property type="entry name" value="GPCRRHODOPSN"/>
</dbReference>
<dbReference type="PRINTS" id="PR01012">
    <property type="entry name" value="NRPEPTIDEYR"/>
</dbReference>
<dbReference type="SMART" id="SM01381">
    <property type="entry name" value="7TM_GPCR_Srsx"/>
    <property type="match status" value="1"/>
</dbReference>
<dbReference type="SUPFAM" id="SSF81321">
    <property type="entry name" value="Family A G protein-coupled receptor-like"/>
    <property type="match status" value="1"/>
</dbReference>
<dbReference type="PROSITE" id="PS00237">
    <property type="entry name" value="G_PROTEIN_RECEP_F1_1"/>
    <property type="match status" value="1"/>
</dbReference>
<dbReference type="PROSITE" id="PS50262">
    <property type="entry name" value="G_PROTEIN_RECEP_F1_2"/>
    <property type="match status" value="1"/>
</dbReference>
<gene>
    <name evidence="15" type="primary">GPR83</name>
    <name evidence="11" type="synonym">GPR72</name>
    <name evidence="13" type="synonym">JP05</name>
    <name evidence="12" type="synonym">KIAA1540</name>
</gene>
<protein>
    <recommendedName>
        <fullName>G-protein coupled receptor 83</fullName>
    </recommendedName>
    <alternativeName>
        <fullName>G-protein coupled receptor 72</fullName>
    </alternativeName>
</protein>
<feature type="signal peptide" evidence="3">
    <location>
        <begin position="1"/>
        <end position="16"/>
    </location>
</feature>
<feature type="chain" id="PRO_0000012803" description="G-protein coupled receptor 83">
    <location>
        <begin position="17"/>
        <end position="423"/>
    </location>
</feature>
<feature type="topological domain" description="Extracellular" evidence="3">
    <location>
        <begin position="18"/>
        <end position="71"/>
    </location>
</feature>
<feature type="transmembrane region" description="Helical; Name=1" evidence="3">
    <location>
        <begin position="72"/>
        <end position="92"/>
    </location>
</feature>
<feature type="topological domain" description="Cytoplasmic" evidence="3">
    <location>
        <begin position="93"/>
        <end position="107"/>
    </location>
</feature>
<feature type="transmembrane region" description="Helical; Name=2" evidence="3">
    <location>
        <begin position="108"/>
        <end position="129"/>
    </location>
</feature>
<feature type="topological domain" description="Extracellular" evidence="3">
    <location>
        <begin position="130"/>
        <end position="145"/>
    </location>
</feature>
<feature type="transmembrane region" description="Helical; Name=3" evidence="3">
    <location>
        <begin position="146"/>
        <end position="167"/>
    </location>
</feature>
<feature type="topological domain" description="Cytoplasmic" evidence="3">
    <location>
        <begin position="168"/>
        <end position="186"/>
    </location>
</feature>
<feature type="transmembrane region" description="Helical; Name=4" evidence="3">
    <location>
        <begin position="187"/>
        <end position="208"/>
    </location>
</feature>
<feature type="topological domain" description="Extracellular" evidence="3">
    <location>
        <begin position="209"/>
        <end position="238"/>
    </location>
</feature>
<feature type="transmembrane region" description="Helical; Name=5" evidence="3">
    <location>
        <begin position="239"/>
        <end position="260"/>
    </location>
</feature>
<feature type="topological domain" description="Cytoplasmic" evidence="3">
    <location>
        <begin position="261"/>
        <end position="293"/>
    </location>
</feature>
<feature type="transmembrane region" description="Helical; Name=6" evidence="3">
    <location>
        <begin position="294"/>
        <end position="315"/>
    </location>
</feature>
<feature type="topological domain" description="Extracellular" evidence="3">
    <location>
        <begin position="316"/>
        <end position="327"/>
    </location>
</feature>
<feature type="transmembrane region" description="Helical; Name=7" evidence="3">
    <location>
        <begin position="328"/>
        <end position="348"/>
    </location>
</feature>
<feature type="topological domain" description="Cytoplasmic" evidence="3">
    <location>
        <begin position="349"/>
        <end position="423"/>
    </location>
</feature>
<feature type="region of interest" description="Disordered" evidence="5">
    <location>
        <begin position="402"/>
        <end position="423"/>
    </location>
</feature>
<feature type="compositionally biased region" description="Polar residues" evidence="5">
    <location>
        <begin position="402"/>
        <end position="414"/>
    </location>
</feature>
<feature type="glycosylation site" description="N-linked (GlcNAc...) asparagine" evidence="3">
    <location>
        <position position="37"/>
    </location>
</feature>
<feature type="glycosylation site" description="N-linked (GlcNAc...) asparagine" evidence="3">
    <location>
        <position position="46"/>
    </location>
</feature>
<feature type="glycosylation site" description="N-linked (GlcNAc...) asparagine" evidence="3">
    <location>
        <position position="134"/>
    </location>
</feature>
<feature type="disulfide bond" evidence="4">
    <location>
        <begin position="144"/>
        <end position="224"/>
    </location>
</feature>
<feature type="splice variant" id="VSP_061501" description="In isoform 2.">
    <location>
        <begin position="131"/>
        <end position="172"/>
    </location>
</feature>
<feature type="sequence variant" id="VAR_047079" description="In dbSNP:rs3740868." evidence="6 7 10">
    <original>P</original>
    <variation>Q</variation>
    <location>
        <position position="374"/>
    </location>
</feature>
<feature type="sequence conflict" description="In Ref. 1; AAF43705." evidence="14" ref="1">
    <original>R</original>
    <variation>G</variation>
    <location>
        <position position="373"/>
    </location>
</feature>
<name>GPR83_HUMAN</name>
<evidence type="ECO:0000250" key="1">
    <source>
        <dbReference type="UniProtKB" id="P30731"/>
    </source>
</evidence>
<evidence type="ECO:0000250" key="2">
    <source>
        <dbReference type="UniProtKB" id="Q8VHD7"/>
    </source>
</evidence>
<evidence type="ECO:0000255" key="3"/>
<evidence type="ECO:0000255" key="4">
    <source>
        <dbReference type="PROSITE-ProRule" id="PRU00521"/>
    </source>
</evidence>
<evidence type="ECO:0000256" key="5">
    <source>
        <dbReference type="SAM" id="MobiDB-lite"/>
    </source>
</evidence>
<evidence type="ECO:0000269" key="6">
    <source>
    </source>
</evidence>
<evidence type="ECO:0000269" key="7">
    <source>
    </source>
</evidence>
<evidence type="ECO:0000269" key="8">
    <source>
    </source>
</evidence>
<evidence type="ECO:0000269" key="9">
    <source>
    </source>
</evidence>
<evidence type="ECO:0000269" key="10">
    <source ref="6"/>
</evidence>
<evidence type="ECO:0000303" key="11">
    <source>
    </source>
</evidence>
<evidence type="ECO:0000303" key="12">
    <source>
    </source>
</evidence>
<evidence type="ECO:0000303" key="13">
    <source>
    </source>
</evidence>
<evidence type="ECO:0000305" key="14"/>
<evidence type="ECO:0000312" key="15">
    <source>
        <dbReference type="HGNC" id="HGNC:4523"/>
    </source>
</evidence>
<reference key="1">
    <citation type="journal article" date="2000" name="Biochim. Biophys. Acta">
        <title>Y-receptor-like genes GPR72 and GPR73: molecular cloning, genomic organisation and assignment to human chromosome 11q21.1 and 2p14 and mouse chromosome 9 and 6.</title>
        <authorList>
            <person name="Parker R."/>
            <person name="Liu M."/>
            <person name="Eyre H.J."/>
            <person name="Copeland N.G."/>
            <person name="Gilbert D.J."/>
            <person name="Crawford J."/>
            <person name="Sutherland G.R."/>
            <person name="Jenkins N.A."/>
            <person name="Herzog H."/>
        </authorList>
    </citation>
    <scope>NUCLEOTIDE SEQUENCE [MRNA]</scope>
    <scope>VARIANT GLN-374</scope>
</reference>
<reference key="2">
    <citation type="journal article" date="2000" name="DNA Res.">
        <title>Prediction of the coding sequences of unidentified human genes. XVII. The complete sequences of 100 new cDNA clones from brain which code for large proteins in vitro.</title>
        <authorList>
            <person name="Nagase T."/>
            <person name="Kikuno R."/>
            <person name="Ishikawa K."/>
            <person name="Hirosawa M."/>
            <person name="Ohara O."/>
        </authorList>
    </citation>
    <scope>NUCLEOTIDE SEQUENCE [LARGE SCALE MRNA]</scope>
    <scope>VARIANT GLN-374</scope>
    <source>
        <tissue>Brain</tissue>
    </source>
</reference>
<reference key="3">
    <citation type="journal article" date="2004" name="Nat. Genet.">
        <title>Complete sequencing and characterization of 21,243 full-length human cDNAs.</title>
        <authorList>
            <person name="Ota T."/>
            <person name="Suzuki Y."/>
            <person name="Nishikawa T."/>
            <person name="Otsuki T."/>
            <person name="Sugiyama T."/>
            <person name="Irie R."/>
            <person name="Wakamatsu A."/>
            <person name="Hayashi K."/>
            <person name="Sato H."/>
            <person name="Nagai K."/>
            <person name="Kimura K."/>
            <person name="Makita H."/>
            <person name="Sekine M."/>
            <person name="Obayashi M."/>
            <person name="Nishi T."/>
            <person name="Shibahara T."/>
            <person name="Tanaka T."/>
            <person name="Ishii S."/>
            <person name="Yamamoto J."/>
            <person name="Saito K."/>
            <person name="Kawai Y."/>
            <person name="Isono Y."/>
            <person name="Nakamura Y."/>
            <person name="Nagahari K."/>
            <person name="Murakami K."/>
            <person name="Yasuda T."/>
            <person name="Iwayanagi T."/>
            <person name="Wagatsuma M."/>
            <person name="Shiratori A."/>
            <person name="Sudo H."/>
            <person name="Hosoiri T."/>
            <person name="Kaku Y."/>
            <person name="Kodaira H."/>
            <person name="Kondo H."/>
            <person name="Sugawara M."/>
            <person name="Takahashi M."/>
            <person name="Kanda K."/>
            <person name="Yokoi T."/>
            <person name="Furuya T."/>
            <person name="Kikkawa E."/>
            <person name="Omura Y."/>
            <person name="Abe K."/>
            <person name="Kamihara K."/>
            <person name="Katsuta N."/>
            <person name="Sato K."/>
            <person name="Tanikawa M."/>
            <person name="Yamazaki M."/>
            <person name="Ninomiya K."/>
            <person name="Ishibashi T."/>
            <person name="Yamashita H."/>
            <person name="Murakawa K."/>
            <person name="Fujimori K."/>
            <person name="Tanai H."/>
            <person name="Kimata M."/>
            <person name="Watanabe M."/>
            <person name="Hiraoka S."/>
            <person name="Chiba Y."/>
            <person name="Ishida S."/>
            <person name="Ono Y."/>
            <person name="Takiguchi S."/>
            <person name="Watanabe S."/>
            <person name="Yosida M."/>
            <person name="Hotuta T."/>
            <person name="Kusano J."/>
            <person name="Kanehori K."/>
            <person name="Takahashi-Fujii A."/>
            <person name="Hara H."/>
            <person name="Tanase T.-O."/>
            <person name="Nomura Y."/>
            <person name="Togiya S."/>
            <person name="Komai F."/>
            <person name="Hara R."/>
            <person name="Takeuchi K."/>
            <person name="Arita M."/>
            <person name="Imose N."/>
            <person name="Musashino K."/>
            <person name="Yuuki H."/>
            <person name="Oshima A."/>
            <person name="Sasaki N."/>
            <person name="Aotsuka S."/>
            <person name="Yoshikawa Y."/>
            <person name="Matsunawa H."/>
            <person name="Ichihara T."/>
            <person name="Shiohata N."/>
            <person name="Sano S."/>
            <person name="Moriya S."/>
            <person name="Momiyama H."/>
            <person name="Satoh N."/>
            <person name="Takami S."/>
            <person name="Terashima Y."/>
            <person name="Suzuki O."/>
            <person name="Nakagawa S."/>
            <person name="Senoh A."/>
            <person name="Mizoguchi H."/>
            <person name="Goto Y."/>
            <person name="Shimizu F."/>
            <person name="Wakebe H."/>
            <person name="Hishigaki H."/>
            <person name="Watanabe T."/>
            <person name="Sugiyama A."/>
            <person name="Takemoto M."/>
            <person name="Kawakami B."/>
            <person name="Yamazaki M."/>
            <person name="Watanabe K."/>
            <person name="Kumagai A."/>
            <person name="Itakura S."/>
            <person name="Fukuzumi Y."/>
            <person name="Fujimori Y."/>
            <person name="Komiyama M."/>
            <person name="Tashiro H."/>
            <person name="Tanigami A."/>
            <person name="Fujiwara T."/>
            <person name="Ono T."/>
            <person name="Yamada K."/>
            <person name="Fujii Y."/>
            <person name="Ozaki K."/>
            <person name="Hirao M."/>
            <person name="Ohmori Y."/>
            <person name="Kawabata A."/>
            <person name="Hikiji T."/>
            <person name="Kobatake N."/>
            <person name="Inagaki H."/>
            <person name="Ikema Y."/>
            <person name="Okamoto S."/>
            <person name="Okitani R."/>
            <person name="Kawakami T."/>
            <person name="Noguchi S."/>
            <person name="Itoh T."/>
            <person name="Shigeta K."/>
            <person name="Senba T."/>
            <person name="Matsumura K."/>
            <person name="Nakajima Y."/>
            <person name="Mizuno T."/>
            <person name="Morinaga M."/>
            <person name="Sasaki M."/>
            <person name="Togashi T."/>
            <person name="Oyama M."/>
            <person name="Hata H."/>
            <person name="Watanabe M."/>
            <person name="Komatsu T."/>
            <person name="Mizushima-Sugano J."/>
            <person name="Satoh T."/>
            <person name="Shirai Y."/>
            <person name="Takahashi Y."/>
            <person name="Nakagawa K."/>
            <person name="Okumura K."/>
            <person name="Nagase T."/>
            <person name="Nomura N."/>
            <person name="Kikuchi H."/>
            <person name="Masuho Y."/>
            <person name="Yamashita R."/>
            <person name="Nakai K."/>
            <person name="Yada T."/>
            <person name="Nakamura Y."/>
            <person name="Ohara O."/>
            <person name="Isogai T."/>
            <person name="Sugano S."/>
        </authorList>
    </citation>
    <scope>NUCLEOTIDE SEQUENCE [LARGE SCALE MRNA]</scope>
    <source>
        <tissue>Cerebellum</tissue>
    </source>
</reference>
<reference key="4">
    <citation type="journal article" date="2006" name="Nature">
        <title>Human chromosome 11 DNA sequence and analysis including novel gene identification.</title>
        <authorList>
            <person name="Taylor T.D."/>
            <person name="Noguchi H."/>
            <person name="Totoki Y."/>
            <person name="Toyoda A."/>
            <person name="Kuroki Y."/>
            <person name="Dewar K."/>
            <person name="Lloyd C."/>
            <person name="Itoh T."/>
            <person name="Takeda T."/>
            <person name="Kim D.-W."/>
            <person name="She X."/>
            <person name="Barlow K.F."/>
            <person name="Bloom T."/>
            <person name="Bruford E."/>
            <person name="Chang J.L."/>
            <person name="Cuomo C.A."/>
            <person name="Eichler E."/>
            <person name="FitzGerald M.G."/>
            <person name="Jaffe D.B."/>
            <person name="LaButti K."/>
            <person name="Nicol R."/>
            <person name="Park H.-S."/>
            <person name="Seaman C."/>
            <person name="Sougnez C."/>
            <person name="Yang X."/>
            <person name="Zimmer A.R."/>
            <person name="Zody M.C."/>
            <person name="Birren B.W."/>
            <person name="Nusbaum C."/>
            <person name="Fujiyama A."/>
            <person name="Hattori M."/>
            <person name="Rogers J."/>
            <person name="Lander E.S."/>
            <person name="Sakaki Y."/>
        </authorList>
    </citation>
    <scope>NUCLEOTIDE SEQUENCE [LARGE SCALE GENOMIC DNA]</scope>
</reference>
<reference key="5">
    <citation type="submission" date="2005-07" db="EMBL/GenBank/DDBJ databases">
        <authorList>
            <person name="Mural R.J."/>
            <person name="Istrail S."/>
            <person name="Sutton G.G."/>
            <person name="Florea L."/>
            <person name="Halpern A.L."/>
            <person name="Mobarry C.M."/>
            <person name="Lippert R."/>
            <person name="Walenz B."/>
            <person name="Shatkay H."/>
            <person name="Dew I."/>
            <person name="Miller J.R."/>
            <person name="Flanigan M.J."/>
            <person name="Edwards N.J."/>
            <person name="Bolanos R."/>
            <person name="Fasulo D."/>
            <person name="Halldorsson B.V."/>
            <person name="Hannenhalli S."/>
            <person name="Turner R."/>
            <person name="Yooseph S."/>
            <person name="Lu F."/>
            <person name="Nusskern D.R."/>
            <person name="Shue B.C."/>
            <person name="Zheng X.H."/>
            <person name="Zhong F."/>
            <person name="Delcher A.L."/>
            <person name="Huson D.H."/>
            <person name="Kravitz S.A."/>
            <person name="Mouchard L."/>
            <person name="Reinert K."/>
            <person name="Remington K.A."/>
            <person name="Clark A.G."/>
            <person name="Waterman M.S."/>
            <person name="Eichler E.E."/>
            <person name="Adams M.D."/>
            <person name="Hunkapiller M.W."/>
            <person name="Myers E.W."/>
            <person name="Venter J.C."/>
        </authorList>
    </citation>
    <scope>NUCLEOTIDE SEQUENCE [LARGE SCALE GENOMIC DNA]</scope>
</reference>
<reference key="6">
    <citation type="submission" date="2007-12" db="EMBL/GenBank/DDBJ databases">
        <authorList>
            <person name="Kaighin V.A."/>
            <person name="Martin A.L."/>
            <person name="Aronstam R.S."/>
        </authorList>
    </citation>
    <scope>NUCLEOTIDE SEQUENCE [MRNA]</scope>
    <scope>VARIANT GLN-374</scope>
    <source>
        <tissue>Brain</tissue>
    </source>
</reference>
<reference key="7">
    <citation type="journal article" date="2004" name="Genome Res.">
        <title>The status, quality, and expansion of the NIH full-length cDNA project: the Mammalian Gene Collection (MGC).</title>
        <authorList>
            <consortium name="The MGC Project Team"/>
        </authorList>
    </citation>
    <scope>NUCLEOTIDE SEQUENCE [LARGE SCALE MRNA]</scope>
</reference>
<reference key="8">
    <citation type="journal article" date="2001" name="Brain Res.">
        <title>Distribution of an orphan G-protein coupled receptor (JP05) mRNA in the human brain.</title>
        <authorList>
            <person name="Brezillon S."/>
            <person name="Detheux M."/>
            <person name="Parmentier M."/>
            <person name="Hoekfelt T."/>
            <person name="Hurd Y.L."/>
        </authorList>
    </citation>
    <scope>TISSUE SPECIFICITY</scope>
</reference>
<reference key="9">
    <citation type="journal article" date="2016" name="Sci. Signal.">
        <title>Identification of GPR83 as the receptor for the neuroendocrine peptide PEN.</title>
        <authorList>
            <person name="Gomes I."/>
            <person name="Bobeck E.N."/>
            <person name="Margolis E.B."/>
            <person name="Gupta A."/>
            <person name="Sierra S."/>
            <person name="Fakira A.K."/>
            <person name="Fujita W."/>
            <person name="Mueller T.D."/>
            <person name="Mueller A."/>
            <person name="Tschoep M.H."/>
            <person name="Kleinau G."/>
            <person name="Fricker L.D."/>
            <person name="Devi L.A."/>
        </authorList>
    </citation>
    <scope>FUNCTION</scope>
    <scope>LIGAND-BINDING</scope>
</reference>
<sequence>MVPHLLLLCLLPLVRATEPHEGRADEQSAEAALAVPNASHFFSWNNYTFSDWQNFVGRRRYGAESQNPTVKALLIVAYSFIIVFSLFGNVLVCHVIFKNQRMHSATSLFIVNLAVADIMITLLNTPFTLVRFVNSTWIFGKGMCHVSRFAQYCSLHVSALTLTAIAVDRHQVIMHPLKPRISITKGVIYIAVIWTMATFFSLPHAICQKLFTFKYSEDIVRSLCLPDFPEPADLFWKYLDLATFILLYILPLLIISVAYARVAKKLWLCNMIGDVTTEQYFALRRKKKKTIKMLMLVVVLFALCWFPLNCYVLLLSSKVIRTNNALYFAFHWFAMSSTCYNPFIYCWLNENFRIELKALLSMCQRPPKPQEDRPPSPVPSFRVAWTEKNDGQRAPLANNLLPTSQLQSGKTDLSSVEPIVTMS</sequence>